<organism>
    <name type="scientific">Ephedra major</name>
    <name type="common">Joint-fir</name>
    <name type="synonym">Ephedra nebrodensis</name>
    <dbReference type="NCBI Taxonomy" id="34344"/>
    <lineage>
        <taxon>Eukaryota</taxon>
        <taxon>Viridiplantae</taxon>
        <taxon>Streptophyta</taxon>
        <taxon>Embryophyta</taxon>
        <taxon>Tracheophyta</taxon>
        <taxon>Spermatophyta</taxon>
        <taxon>Gnetopsida</taxon>
        <taxon>Gnetidae</taxon>
        <taxon>Ephedrales</taxon>
        <taxon>Ephedraceae</taxon>
        <taxon>Ephedra</taxon>
    </lineage>
</organism>
<comment type="function">
    <text evidence="2">Component of the cytochrome c oxidase, the last enzyme in the mitochondrial electron transport chain which drives oxidative phosphorylation. The respiratory chain contains 3 multisubunit complexes succinate dehydrogenase (complex II, CII), ubiquinol-cytochrome c oxidoreductase (cytochrome b-c1 complex, complex III, CIII) and cytochrome c oxidase (complex IV, CIV), that cooperate to transfer electrons derived from NADH and succinate to molecular oxygen, creating an electrochemical gradient over the inner membrane that drives transmembrane transport and the ATP synthase. Cytochrome c oxidase is the component of the respiratory chain that catalyzes the reduction of oxygen to water. Electrons originating from reduced cytochrome c in the intermembrane space (IMS) are transferred via the dinuclear copper A center (CU(A)) of subunit 2 and heme A of subunit 1 to the active site in subunit 1, a binuclear center (BNC) formed by heme A3 and copper B (CU(B)). The BNC reduces molecular oxygen to 2 water molecules using 4 electrons from cytochrome c in the IMS and 4 protons from the mitochondrial matrix.</text>
</comment>
<comment type="catalytic activity">
    <reaction evidence="2">
        <text>4 Fe(II)-[cytochrome c] + O2 + 8 H(+)(in) = 4 Fe(III)-[cytochrome c] + 2 H2O + 4 H(+)(out)</text>
        <dbReference type="Rhea" id="RHEA:11436"/>
        <dbReference type="Rhea" id="RHEA-COMP:10350"/>
        <dbReference type="Rhea" id="RHEA-COMP:14399"/>
        <dbReference type="ChEBI" id="CHEBI:15377"/>
        <dbReference type="ChEBI" id="CHEBI:15378"/>
        <dbReference type="ChEBI" id="CHEBI:15379"/>
        <dbReference type="ChEBI" id="CHEBI:29033"/>
        <dbReference type="ChEBI" id="CHEBI:29034"/>
        <dbReference type="EC" id="7.1.1.9"/>
    </reaction>
    <physiologicalReaction direction="left-to-right" evidence="2">
        <dbReference type="Rhea" id="RHEA:11437"/>
    </physiologicalReaction>
</comment>
<comment type="cofactor">
    <cofactor evidence="2">
        <name>heme</name>
        <dbReference type="ChEBI" id="CHEBI:30413"/>
    </cofactor>
    <text evidence="2">Binds 2 heme A groups non-covalently per subunit.</text>
</comment>
<comment type="cofactor">
    <cofactor evidence="2">
        <name>Cu cation</name>
        <dbReference type="ChEBI" id="CHEBI:23378"/>
    </cofactor>
    <text evidence="2">Binds a copper B center.</text>
</comment>
<comment type="pathway">
    <text evidence="2">Energy metabolism; oxidative phosphorylation.</text>
</comment>
<comment type="subunit">
    <text evidence="2">Component of the cytochrome c oxidase (complex IV, CIV), a multisubunit enzyme composed of a catalytic core of 3 subunits and several supernumerary subunits. The complex exists as a monomer or a dimer and forms supercomplexes (SCs) in the inner mitochondrial membrane with ubiquinol-cytochrome c oxidoreductase (cytochrome b-c1 complex, complex III, CIII).</text>
</comment>
<comment type="subcellular location">
    <subcellularLocation>
        <location evidence="2">Mitochondrion inner membrane</location>
        <topology evidence="2">Multi-pass membrane protein</topology>
    </subcellularLocation>
</comment>
<comment type="similarity">
    <text evidence="4">Belongs to the heme-copper respiratory oxidase family.</text>
</comment>
<dbReference type="EC" id="7.1.1.9"/>
<dbReference type="EMBL" id="X94586">
    <property type="protein sequence ID" value="CAA64279.1"/>
    <property type="molecule type" value="Genomic_DNA"/>
</dbReference>
<dbReference type="SMR" id="Q33439"/>
<dbReference type="UniPathway" id="UPA00705"/>
<dbReference type="GO" id="GO:0005743">
    <property type="term" value="C:mitochondrial inner membrane"/>
    <property type="evidence" value="ECO:0007669"/>
    <property type="project" value="UniProtKB-SubCell"/>
</dbReference>
<dbReference type="GO" id="GO:0004129">
    <property type="term" value="F:cytochrome-c oxidase activity"/>
    <property type="evidence" value="ECO:0007669"/>
    <property type="project" value="UniProtKB-EC"/>
</dbReference>
<dbReference type="GO" id="GO:0020037">
    <property type="term" value="F:heme binding"/>
    <property type="evidence" value="ECO:0007669"/>
    <property type="project" value="InterPro"/>
</dbReference>
<dbReference type="GO" id="GO:0046872">
    <property type="term" value="F:metal ion binding"/>
    <property type="evidence" value="ECO:0007669"/>
    <property type="project" value="UniProtKB-KW"/>
</dbReference>
<dbReference type="GO" id="GO:0015990">
    <property type="term" value="P:electron transport coupled proton transport"/>
    <property type="evidence" value="ECO:0007669"/>
    <property type="project" value="TreeGrafter"/>
</dbReference>
<dbReference type="GO" id="GO:0006123">
    <property type="term" value="P:mitochondrial electron transport, cytochrome c to oxygen"/>
    <property type="evidence" value="ECO:0007669"/>
    <property type="project" value="TreeGrafter"/>
</dbReference>
<dbReference type="Gene3D" id="1.20.210.10">
    <property type="entry name" value="Cytochrome c oxidase-like, subunit I domain"/>
    <property type="match status" value="1"/>
</dbReference>
<dbReference type="InterPro" id="IPR023616">
    <property type="entry name" value="Cyt_c_oxase-like_su1_dom"/>
</dbReference>
<dbReference type="InterPro" id="IPR036927">
    <property type="entry name" value="Cyt_c_oxase-like_su1_sf"/>
</dbReference>
<dbReference type="InterPro" id="IPR000883">
    <property type="entry name" value="Cyt_C_Oxase_1"/>
</dbReference>
<dbReference type="InterPro" id="IPR023615">
    <property type="entry name" value="Cyt_c_Oxase_su1_BS"/>
</dbReference>
<dbReference type="PANTHER" id="PTHR10422">
    <property type="entry name" value="CYTOCHROME C OXIDASE SUBUNIT 1"/>
    <property type="match status" value="1"/>
</dbReference>
<dbReference type="PANTHER" id="PTHR10422:SF18">
    <property type="entry name" value="CYTOCHROME C OXIDASE SUBUNIT 1"/>
    <property type="match status" value="1"/>
</dbReference>
<dbReference type="Pfam" id="PF00115">
    <property type="entry name" value="COX1"/>
    <property type="match status" value="1"/>
</dbReference>
<dbReference type="PRINTS" id="PR01165">
    <property type="entry name" value="CYCOXIDASEI"/>
</dbReference>
<dbReference type="SUPFAM" id="SSF81442">
    <property type="entry name" value="Cytochrome c oxidase subunit I-like"/>
    <property type="match status" value="1"/>
</dbReference>
<dbReference type="PROSITE" id="PS50855">
    <property type="entry name" value="COX1"/>
    <property type="match status" value="1"/>
</dbReference>
<dbReference type="PROSITE" id="PS00077">
    <property type="entry name" value="COX1_CUB"/>
    <property type="match status" value="1"/>
</dbReference>
<protein>
    <recommendedName>
        <fullName>Cytochrome c oxidase subunit 1</fullName>
        <ecNumber>7.1.1.9</ecNumber>
    </recommendedName>
    <alternativeName>
        <fullName>Cytochrome c oxidase polypeptide I</fullName>
    </alternativeName>
</protein>
<gene>
    <name type="primary">COX1</name>
    <name type="synonym">COI</name>
    <name type="synonym">COXI</name>
</gene>
<keyword id="KW-0186">Copper</keyword>
<keyword id="KW-0249">Electron transport</keyword>
<keyword id="KW-0349">Heme</keyword>
<keyword id="KW-0408">Iron</keyword>
<keyword id="KW-0460">Magnesium</keyword>
<keyword id="KW-0472">Membrane</keyword>
<keyword id="KW-0479">Metal-binding</keyword>
<keyword id="KW-0496">Mitochondrion</keyword>
<keyword id="KW-0999">Mitochondrion inner membrane</keyword>
<keyword id="KW-0679">Respiratory chain</keyword>
<keyword id="KW-1278">Translocase</keyword>
<keyword id="KW-0812">Transmembrane</keyword>
<keyword id="KW-1133">Transmembrane helix</keyword>
<keyword id="KW-0813">Transport</keyword>
<feature type="chain" id="PRO_0000183332" description="Cytochrome c oxidase subunit 1">
    <location>
        <begin position="1" status="less than"/>
        <end position="172" status="greater than"/>
    </location>
</feature>
<feature type="transmembrane region" description="Helical" evidence="3">
    <location>
        <begin position="31"/>
        <end position="51"/>
    </location>
</feature>
<feature type="transmembrane region" description="Helical" evidence="3">
    <location>
        <begin position="63"/>
        <end position="83"/>
    </location>
</feature>
<feature type="transmembrane region" description="Helical" evidence="3">
    <location>
        <begin position="106"/>
        <end position="126"/>
    </location>
</feature>
<feature type="transmembrane region" description="Helical" evidence="3">
    <location>
        <begin position="134"/>
        <end position="154"/>
    </location>
</feature>
<feature type="binding site" evidence="2">
    <location>
        <position position="37"/>
    </location>
    <ligand>
        <name>Cu cation</name>
        <dbReference type="ChEBI" id="CHEBI:23378"/>
        <label>B</label>
    </ligand>
</feature>
<feature type="binding site" evidence="1">
    <location>
        <position position="41"/>
    </location>
    <ligand>
        <name>O2</name>
        <dbReference type="ChEBI" id="CHEBI:15379"/>
    </ligand>
</feature>
<feature type="binding site" evidence="2">
    <location>
        <position position="86"/>
    </location>
    <ligand>
        <name>Cu cation</name>
        <dbReference type="ChEBI" id="CHEBI:23378"/>
        <label>B</label>
    </ligand>
</feature>
<feature type="binding site" evidence="2">
    <location>
        <position position="87"/>
    </location>
    <ligand>
        <name>Cu cation</name>
        <dbReference type="ChEBI" id="CHEBI:23378"/>
        <label>B</label>
    </ligand>
</feature>
<feature type="binding site" evidence="2">
    <location>
        <position position="164"/>
    </location>
    <ligand>
        <name>Mg(2+)</name>
        <dbReference type="ChEBI" id="CHEBI:18420"/>
        <note>ligand shared with subunit 2</note>
    </ligand>
</feature>
<feature type="binding site" evidence="2">
    <location>
        <position position="165"/>
    </location>
    <ligand>
        <name>Mg(2+)</name>
        <dbReference type="ChEBI" id="CHEBI:18420"/>
        <note>ligand shared with subunit 2</note>
    </ligand>
</feature>
<feature type="binding site" description="axial binding residue" evidence="2">
    <location>
        <position position="172"/>
    </location>
    <ligand>
        <name>heme a3</name>
        <dbReference type="ChEBI" id="CHEBI:83282"/>
        <note>high-spin</note>
    </ligand>
    <ligandPart>
        <name>Fe</name>
        <dbReference type="ChEBI" id="CHEBI:18248"/>
    </ligandPart>
</feature>
<feature type="cross-link" description="1'-histidyl-3'-tyrosine (His-Tyr)" evidence="2">
    <location>
        <begin position="37"/>
        <end position="41"/>
    </location>
</feature>
<feature type="non-terminal residue">
    <location>
        <position position="1"/>
    </location>
</feature>
<feature type="non-terminal residue">
    <location>
        <position position="172"/>
    </location>
</feature>
<sequence length="172" mass="18799">GAITMLLTDRNFNTTFFDPAGGGDPILYQHLFWFFGHPEVYILILPGFGIISQIVSTLSGKQVFGYLGMVYAMISIGVLGFMVWAHHMFTVGLDVDTRAYFTAATMIIAVPTGIKIFSWIATMWGGSIRSITPMLFAVGFLFLFTIGGLTGIVLANSGLDIALHDTYYVVAH</sequence>
<proteinExistence type="inferred from homology"/>
<name>COX1_EPHMA</name>
<reference key="1">
    <citation type="journal article" date="1996" name="Biochim. Biophys. Acta">
        <title>Universality of mitochondrial RNA editing in cytochrome-c oxidase subunit I (coxI) among the land plants.</title>
        <authorList>
            <person name="Sper-Whitis G.L."/>
            <person name="Moody J.L."/>
            <person name="Vaughn J.C."/>
        </authorList>
    </citation>
    <scope>NUCLEOTIDE SEQUENCE [GENOMIC DNA]</scope>
    <source>
        <tissue>Leaf</tissue>
    </source>
</reference>
<evidence type="ECO:0000250" key="1">
    <source>
        <dbReference type="UniProtKB" id="P00396"/>
    </source>
</evidence>
<evidence type="ECO:0000250" key="2">
    <source>
        <dbReference type="UniProtKB" id="P00401"/>
    </source>
</evidence>
<evidence type="ECO:0000255" key="3"/>
<evidence type="ECO:0000305" key="4"/>
<accession>Q33439</accession>
<geneLocation type="mitochondrion"/>